<keyword id="KW-0274">FAD</keyword>
<keyword id="KW-0285">Flavoprotein</keyword>
<keyword id="KW-0472">Membrane</keyword>
<keyword id="KW-0496">Mitochondrion</keyword>
<keyword id="KW-1000">Mitochondrion outer membrane</keyword>
<keyword id="KW-0520">NAD</keyword>
<keyword id="KW-0560">Oxidoreductase</keyword>
<keyword id="KW-0808">Transferase</keyword>
<keyword id="KW-0812">Transmembrane</keyword>
<keyword id="KW-1133">Transmembrane helix</keyword>
<feature type="chain" id="PRO_0000330158" description="NADH-cytochrome b5 reductase 1">
    <location>
        <begin position="1"/>
        <end position="298"/>
    </location>
</feature>
<feature type="transmembrane region" description="Helical" evidence="3">
    <location>
        <begin position="14"/>
        <end position="34"/>
    </location>
</feature>
<feature type="domain" description="FAD-binding FR-type" evidence="4">
    <location>
        <begin position="56"/>
        <end position="159"/>
    </location>
</feature>
<feature type="binding site" evidence="1">
    <location>
        <begin position="139"/>
        <end position="154"/>
    </location>
    <ligand>
        <name>FAD</name>
        <dbReference type="ChEBI" id="CHEBI:57692"/>
    </ligand>
</feature>
<feature type="binding site" evidence="1">
    <location>
        <begin position="165"/>
        <end position="197"/>
    </location>
    <ligand>
        <name>FAD</name>
        <dbReference type="ChEBI" id="CHEBI:57692"/>
    </ligand>
</feature>
<evidence type="ECO:0000250" key="1"/>
<evidence type="ECO:0000250" key="2">
    <source>
        <dbReference type="UniProtKB" id="P38626"/>
    </source>
</evidence>
<evidence type="ECO:0000255" key="3"/>
<evidence type="ECO:0000255" key="4">
    <source>
        <dbReference type="PROSITE-ProRule" id="PRU00716"/>
    </source>
</evidence>
<evidence type="ECO:0000305" key="5"/>
<dbReference type="EC" id="1.6.2.2" evidence="2"/>
<dbReference type="EMBL" id="AB020034">
    <property type="protein sequence ID" value="BAA85586.1"/>
    <property type="molecule type" value="mRNA"/>
</dbReference>
<dbReference type="EMBL" id="AB020035">
    <property type="protein sequence ID" value="BAA85587.1"/>
    <property type="molecule type" value="Genomic_DNA"/>
</dbReference>
<dbReference type="SMR" id="Q9UR35"/>
<dbReference type="OrthoDB" id="432685at2759"/>
<dbReference type="UniPathway" id="UPA00559"/>
<dbReference type="GO" id="GO:0005741">
    <property type="term" value="C:mitochondrial outer membrane"/>
    <property type="evidence" value="ECO:0007669"/>
    <property type="project" value="UniProtKB-SubCell"/>
</dbReference>
<dbReference type="GO" id="GO:0004128">
    <property type="term" value="F:cytochrome-b5 reductase activity, acting on NAD(P)H"/>
    <property type="evidence" value="ECO:0000250"/>
    <property type="project" value="UniProtKB"/>
</dbReference>
<dbReference type="GO" id="GO:0003954">
    <property type="term" value="F:NADH dehydrogenase activity"/>
    <property type="evidence" value="ECO:0000250"/>
    <property type="project" value="UniProtKB"/>
</dbReference>
<dbReference type="GO" id="GO:0016740">
    <property type="term" value="F:transferase activity"/>
    <property type="evidence" value="ECO:0007669"/>
    <property type="project" value="UniProtKB-KW"/>
</dbReference>
<dbReference type="GO" id="GO:0017183">
    <property type="term" value="P:protein histidyl modification to diphthamide"/>
    <property type="evidence" value="ECO:0000250"/>
    <property type="project" value="UniProtKB"/>
</dbReference>
<dbReference type="GO" id="GO:0002926">
    <property type="term" value="P:tRNA wobble base 5-methoxycarbonylmethyl-2-thiouridinylation"/>
    <property type="evidence" value="ECO:0000250"/>
    <property type="project" value="UniProtKB"/>
</dbReference>
<dbReference type="CDD" id="cd06183">
    <property type="entry name" value="cyt_b5_reduct_like"/>
    <property type="match status" value="1"/>
</dbReference>
<dbReference type="FunFam" id="2.40.30.10:FF:000032">
    <property type="entry name" value="NADH-cytochrome b5 reductase"/>
    <property type="match status" value="1"/>
</dbReference>
<dbReference type="FunFam" id="3.40.50.80:FF:000019">
    <property type="entry name" value="NADH-cytochrome b5 reductase"/>
    <property type="match status" value="1"/>
</dbReference>
<dbReference type="Gene3D" id="3.40.50.80">
    <property type="entry name" value="Nucleotide-binding domain of ferredoxin-NADP reductase (FNR) module"/>
    <property type="match status" value="1"/>
</dbReference>
<dbReference type="Gene3D" id="2.40.30.10">
    <property type="entry name" value="Translation factors"/>
    <property type="match status" value="1"/>
</dbReference>
<dbReference type="InterPro" id="IPR001834">
    <property type="entry name" value="CBR-like"/>
</dbReference>
<dbReference type="InterPro" id="IPR008333">
    <property type="entry name" value="Cbr1-like_FAD-bd_dom"/>
</dbReference>
<dbReference type="InterPro" id="IPR017927">
    <property type="entry name" value="FAD-bd_FR_type"/>
</dbReference>
<dbReference type="InterPro" id="IPR001709">
    <property type="entry name" value="Flavoprot_Pyr_Nucl_cyt_Rdtase"/>
</dbReference>
<dbReference type="InterPro" id="IPR039261">
    <property type="entry name" value="FNR_nucleotide-bd"/>
</dbReference>
<dbReference type="InterPro" id="IPR001433">
    <property type="entry name" value="OxRdtase_FAD/NAD-bd"/>
</dbReference>
<dbReference type="InterPro" id="IPR017938">
    <property type="entry name" value="Riboflavin_synthase-like_b-brl"/>
</dbReference>
<dbReference type="PANTHER" id="PTHR19370">
    <property type="entry name" value="NADH-CYTOCHROME B5 REDUCTASE"/>
    <property type="match status" value="1"/>
</dbReference>
<dbReference type="PANTHER" id="PTHR19370:SF184">
    <property type="entry name" value="NADH-CYTOCHROME B5 REDUCTASE-LIKE"/>
    <property type="match status" value="1"/>
</dbReference>
<dbReference type="Pfam" id="PF00970">
    <property type="entry name" value="FAD_binding_6"/>
    <property type="match status" value="1"/>
</dbReference>
<dbReference type="Pfam" id="PF00175">
    <property type="entry name" value="NAD_binding_1"/>
    <property type="match status" value="1"/>
</dbReference>
<dbReference type="PRINTS" id="PR00406">
    <property type="entry name" value="CYTB5RDTASE"/>
</dbReference>
<dbReference type="PRINTS" id="PR00371">
    <property type="entry name" value="FPNCR"/>
</dbReference>
<dbReference type="SUPFAM" id="SSF52343">
    <property type="entry name" value="Ferredoxin reductase-like, C-terminal NADP-linked domain"/>
    <property type="match status" value="1"/>
</dbReference>
<dbReference type="SUPFAM" id="SSF63380">
    <property type="entry name" value="Riboflavin synthase domain-like"/>
    <property type="match status" value="1"/>
</dbReference>
<dbReference type="PROSITE" id="PS51384">
    <property type="entry name" value="FAD_FR"/>
    <property type="match status" value="1"/>
</dbReference>
<sequence>MTLSNPAIAAASGVILAGAYLIDPSALPFVAAGVAATWARVLFKKTAVKTPPMDPKEYRKFKLVDKVHCSPNTAMYKFALPHEDDLLNLPIGQHISIMANINGKDISRSYTPTSSSDDVGHFVLCIKSYPQGNISKMFSELSIGDSINARGPKGQFSYTPNMCRAIGMIAGGTGLTPMLQIIRAIVKNPEDKTQVNFIFANVTEEDIILKAELDLLSQKHPQFKVYYVLNNAPEGWTGGVGFVNADMIKEHMPAPAADIKVLLCGPPPMVSAMSKITQDLGYDKVNAVSKLPDQVFKF</sequence>
<accession>Q9UR35</accession>
<organism>
    <name type="scientific">Mortierella alpina</name>
    <name type="common">Oleaginous fungus</name>
    <name type="synonym">Mortierella renispora</name>
    <dbReference type="NCBI Taxonomy" id="64518"/>
    <lineage>
        <taxon>Eukaryota</taxon>
        <taxon>Fungi</taxon>
        <taxon>Fungi incertae sedis</taxon>
        <taxon>Mucoromycota</taxon>
        <taxon>Mortierellomycotina</taxon>
        <taxon>Mortierellomycetes</taxon>
        <taxon>Mortierellales</taxon>
        <taxon>Mortierellaceae</taxon>
        <taxon>Mortierella</taxon>
    </lineage>
</organism>
<gene>
    <name type="primary">CBR1</name>
</gene>
<proteinExistence type="evidence at transcript level"/>
<comment type="function">
    <text evidence="2">NADH-dependent reductase for DPH3 and cytochrome b5. Required for the first step of diphthamide biosynthesis, a post-translational modification of histidine which occurs in elongation factor 2. DPH1 and DPH2 transfer a 3-amino-3-carboxypropyl (ACP) group from S-adenosyl-L-methionine (SAM) to a histidine residue, the reaction is assisted by a reduction system comprising DPH3 and a NADH-dependent reductase, predominantly CBR1. By reducing DPH3, also involved in the formation of the tRNA wobble base modification mcm5s 2U (5-methoxycarbonylmethyl-2-thiouridine), mediated by the elongator complex. The cytochrome b5/NADH cytochrome b5 reductase electron transfer system supports the catalytic activity of several sterol biosynthetic enzymes.</text>
</comment>
<comment type="catalytic activity">
    <reaction evidence="2">
        <text>2 Fe(III)-[cytochrome b5] + NADH = 2 Fe(II)-[cytochrome b5] + NAD(+) + H(+)</text>
        <dbReference type="Rhea" id="RHEA:46680"/>
        <dbReference type="Rhea" id="RHEA-COMP:10438"/>
        <dbReference type="Rhea" id="RHEA-COMP:10439"/>
        <dbReference type="ChEBI" id="CHEBI:15378"/>
        <dbReference type="ChEBI" id="CHEBI:29033"/>
        <dbReference type="ChEBI" id="CHEBI:29034"/>
        <dbReference type="ChEBI" id="CHEBI:57540"/>
        <dbReference type="ChEBI" id="CHEBI:57945"/>
        <dbReference type="EC" id="1.6.2.2"/>
    </reaction>
</comment>
<comment type="catalytic activity">
    <reaction evidence="2">
        <text>2 Fe(3+)-[Dph3] + NADH = 2 Fe(2+)-[Dph3] + NAD(+) + H(+)</text>
        <dbReference type="Rhea" id="RHEA:71231"/>
        <dbReference type="Rhea" id="RHEA-COMP:18002"/>
        <dbReference type="Rhea" id="RHEA-COMP:18003"/>
        <dbReference type="ChEBI" id="CHEBI:15378"/>
        <dbReference type="ChEBI" id="CHEBI:29033"/>
        <dbReference type="ChEBI" id="CHEBI:29034"/>
        <dbReference type="ChEBI" id="CHEBI:57540"/>
        <dbReference type="ChEBI" id="CHEBI:57945"/>
        <dbReference type="ChEBI" id="CHEBI:83228"/>
    </reaction>
    <physiologicalReaction direction="left-to-right" evidence="2">
        <dbReference type="Rhea" id="RHEA:71232"/>
    </physiologicalReaction>
</comment>
<comment type="cofactor">
    <cofactor evidence="3">
        <name>FAD</name>
        <dbReference type="ChEBI" id="CHEBI:57692"/>
    </cofactor>
</comment>
<comment type="pathway">
    <text evidence="2">Protein modification; peptidyl-diphthamide biosynthesis.</text>
</comment>
<comment type="subunit">
    <text evidence="2">Monomer. Component of the 2-(3-amino-3-carboxypropyl)histidine synthase complex composed of DPH1, DPH2, DPH3 and a NADH-dependent reductase, predominantly CBR1.</text>
</comment>
<comment type="subcellular location">
    <subcellularLocation>
        <location evidence="2">Mitochondrion outer membrane</location>
        <topology evidence="3">Single-pass membrane protein</topology>
    </subcellularLocation>
</comment>
<comment type="similarity">
    <text evidence="5">Belongs to the flavoprotein pyridine nucleotide cytochrome reductase family.</text>
</comment>
<name>NCB5R_MORAP</name>
<protein>
    <recommendedName>
        <fullName>NADH-cytochrome b5 reductase 1</fullName>
        <ecNumber evidence="2">1.6.2.2</ecNumber>
    </recommendedName>
    <alternativeName>
        <fullName>Microsomal cytochrome b reductase</fullName>
    </alternativeName>
</protein>
<reference key="1">
    <citation type="journal article" date="1999" name="Appl. Environ. Microbiol.">
        <title>Identification of an NADH-cytochrome b(5) reductase gene from an arachidonic acid-producing fungus, Mortierella alpina 1S-4, by sequencing of the encoding cDNA and heterologous expression in a fungus, Aspergillus oryzae.</title>
        <authorList>
            <person name="Sakuradani E."/>
            <person name="Kobayashi M."/>
            <person name="Shimizu S."/>
        </authorList>
    </citation>
    <scope>NUCLEOTIDE SEQUENCE</scope>
    <source>
        <strain>1S-4</strain>
    </source>
</reference>